<feature type="chain" id="PRO_0000222558" description="RNA replication protein">
    <location>
        <begin position="1"/>
        <end position="1294"/>
    </location>
</feature>
<feature type="domain" description="Alphavirus-like MT" evidence="3">
    <location>
        <begin position="59"/>
        <end position="224"/>
    </location>
</feature>
<feature type="domain" description="(+)RNA virus helicase ATP-binding">
    <location>
        <begin position="541"/>
        <end position="698"/>
    </location>
</feature>
<feature type="domain" description="(+)RNA virus helicase C-terminal">
    <location>
        <begin position="699"/>
        <end position="832"/>
    </location>
</feature>
<feature type="domain" description="RdRp catalytic" evidence="2">
    <location>
        <begin position="1071"/>
        <end position="1178"/>
    </location>
</feature>
<feature type="binding site" evidence="1">
    <location>
        <begin position="570"/>
        <end position="577"/>
    </location>
    <ligand>
        <name>ATP</name>
        <dbReference type="ChEBI" id="CHEBI:30616"/>
    </ligand>
</feature>
<dbReference type="EC" id="2.7.7.48"/>
<dbReference type="EC" id="3.6.4.13"/>
<dbReference type="EMBL" id="X06728">
    <property type="protein sequence ID" value="CAA29904.1"/>
    <property type="molecule type" value="Genomic_RNA"/>
</dbReference>
<dbReference type="PIR" id="S01085">
    <property type="entry name" value="S01085"/>
</dbReference>
<dbReference type="RefSeq" id="NP_620715.1">
    <property type="nucleotide sequence ID" value="NC_003820.1"/>
</dbReference>
<dbReference type="GeneID" id="944395"/>
<dbReference type="KEGG" id="vg:944395"/>
<dbReference type="Proteomes" id="UP000007627">
    <property type="component" value="Segment"/>
</dbReference>
<dbReference type="GO" id="GO:0005524">
    <property type="term" value="F:ATP binding"/>
    <property type="evidence" value="ECO:0007669"/>
    <property type="project" value="UniProtKB-KW"/>
</dbReference>
<dbReference type="GO" id="GO:0016887">
    <property type="term" value="F:ATP hydrolysis activity"/>
    <property type="evidence" value="ECO:0007669"/>
    <property type="project" value="RHEA"/>
</dbReference>
<dbReference type="GO" id="GO:0008174">
    <property type="term" value="F:mRNA methyltransferase activity"/>
    <property type="evidence" value="ECO:0007669"/>
    <property type="project" value="InterPro"/>
</dbReference>
<dbReference type="GO" id="GO:0003723">
    <property type="term" value="F:RNA binding"/>
    <property type="evidence" value="ECO:0007669"/>
    <property type="project" value="InterPro"/>
</dbReference>
<dbReference type="GO" id="GO:0003724">
    <property type="term" value="F:RNA helicase activity"/>
    <property type="evidence" value="ECO:0007669"/>
    <property type="project" value="UniProtKB-EC"/>
</dbReference>
<dbReference type="GO" id="GO:0003968">
    <property type="term" value="F:RNA-directed RNA polymerase activity"/>
    <property type="evidence" value="ECO:0007669"/>
    <property type="project" value="UniProtKB-KW"/>
</dbReference>
<dbReference type="GO" id="GO:0006351">
    <property type="term" value="P:DNA-templated transcription"/>
    <property type="evidence" value="ECO:0007669"/>
    <property type="project" value="InterPro"/>
</dbReference>
<dbReference type="GO" id="GO:0016556">
    <property type="term" value="P:mRNA modification"/>
    <property type="evidence" value="ECO:0007669"/>
    <property type="project" value="InterPro"/>
</dbReference>
<dbReference type="GO" id="GO:0006396">
    <property type="term" value="P:RNA processing"/>
    <property type="evidence" value="ECO:0007669"/>
    <property type="project" value="InterPro"/>
</dbReference>
<dbReference type="GO" id="GO:0039694">
    <property type="term" value="P:viral RNA genome replication"/>
    <property type="evidence" value="ECO:0007669"/>
    <property type="project" value="InterPro"/>
</dbReference>
<dbReference type="CDD" id="cd23246">
    <property type="entry name" value="Alphaflexiviridae_RdRp"/>
    <property type="match status" value="1"/>
</dbReference>
<dbReference type="Gene3D" id="3.40.50.300">
    <property type="entry name" value="P-loop containing nucleotide triphosphate hydrolases"/>
    <property type="match status" value="1"/>
</dbReference>
<dbReference type="InterPro" id="IPR027351">
    <property type="entry name" value="(+)RNA_virus_helicase_core_dom"/>
</dbReference>
<dbReference type="InterPro" id="IPR002588">
    <property type="entry name" value="Alphavirus-like_MT_dom"/>
</dbReference>
<dbReference type="InterPro" id="IPR043502">
    <property type="entry name" value="DNA/RNA_pol_sf"/>
</dbReference>
<dbReference type="InterPro" id="IPR027417">
    <property type="entry name" value="P-loop_NTPase"/>
</dbReference>
<dbReference type="InterPro" id="IPR001788">
    <property type="entry name" value="RNA-dep_RNA_pol_alsuvir"/>
</dbReference>
<dbReference type="InterPro" id="IPR007094">
    <property type="entry name" value="RNA-dir_pol_PSvirus"/>
</dbReference>
<dbReference type="Pfam" id="PF00978">
    <property type="entry name" value="RdRP_2"/>
    <property type="match status" value="1"/>
</dbReference>
<dbReference type="Pfam" id="PF01443">
    <property type="entry name" value="Viral_helicase1"/>
    <property type="match status" value="1"/>
</dbReference>
<dbReference type="Pfam" id="PF01660">
    <property type="entry name" value="Vmethyltransf"/>
    <property type="match status" value="1"/>
</dbReference>
<dbReference type="SUPFAM" id="SSF56672">
    <property type="entry name" value="DNA/RNA polymerases"/>
    <property type="match status" value="1"/>
</dbReference>
<dbReference type="SUPFAM" id="SSF52540">
    <property type="entry name" value="P-loop containing nucleoside triphosphate hydrolases"/>
    <property type="match status" value="2"/>
</dbReference>
<dbReference type="PROSITE" id="PS51743">
    <property type="entry name" value="ALPHAVIRUS_MT"/>
    <property type="match status" value="1"/>
</dbReference>
<dbReference type="PROSITE" id="PS51657">
    <property type="entry name" value="PSRV_HELICASE"/>
    <property type="match status" value="1"/>
</dbReference>
<dbReference type="PROSITE" id="PS50507">
    <property type="entry name" value="RDRP_SSRNA_POS"/>
    <property type="match status" value="1"/>
</dbReference>
<evidence type="ECO:0000255" key="1"/>
<evidence type="ECO:0000255" key="2">
    <source>
        <dbReference type="PROSITE-ProRule" id="PRU00539"/>
    </source>
</evidence>
<evidence type="ECO:0000255" key="3">
    <source>
        <dbReference type="PROSITE-ProRule" id="PRU01079"/>
    </source>
</evidence>
<evidence type="ECO:0000305" key="4"/>
<organismHost>
    <name type="scientific">Trifolium</name>
    <dbReference type="NCBI Taxonomy" id="3898"/>
</organismHost>
<comment type="function">
    <text evidence="4">RNA replication. The central part of this protein possibly functions as an ATP-binding helicase (Probable).</text>
</comment>
<comment type="catalytic activity">
    <reaction evidence="2">
        <text>RNA(n) + a ribonucleoside 5'-triphosphate = RNA(n+1) + diphosphate</text>
        <dbReference type="Rhea" id="RHEA:21248"/>
        <dbReference type="Rhea" id="RHEA-COMP:14527"/>
        <dbReference type="Rhea" id="RHEA-COMP:17342"/>
        <dbReference type="ChEBI" id="CHEBI:33019"/>
        <dbReference type="ChEBI" id="CHEBI:61557"/>
        <dbReference type="ChEBI" id="CHEBI:140395"/>
        <dbReference type="EC" id="2.7.7.48"/>
    </reaction>
</comment>
<comment type="catalytic activity">
    <reaction>
        <text>ATP + H2O = ADP + phosphate + H(+)</text>
        <dbReference type="Rhea" id="RHEA:13065"/>
        <dbReference type="ChEBI" id="CHEBI:15377"/>
        <dbReference type="ChEBI" id="CHEBI:15378"/>
        <dbReference type="ChEBI" id="CHEBI:30616"/>
        <dbReference type="ChEBI" id="CHEBI:43474"/>
        <dbReference type="ChEBI" id="CHEBI:456216"/>
        <dbReference type="EC" id="3.6.4.13"/>
    </reaction>
</comment>
<comment type="similarity">
    <text evidence="4">Belongs to the potexvirus/carlavirus RNA replication protein family.</text>
</comment>
<proteinExistence type="inferred from homology"/>
<name>RDRP_WCMVM</name>
<keyword id="KW-0067">ATP-binding</keyword>
<keyword id="KW-0347">Helicase</keyword>
<keyword id="KW-0378">Hydrolase</keyword>
<keyword id="KW-0511">Multifunctional enzyme</keyword>
<keyword id="KW-0547">Nucleotide-binding</keyword>
<keyword id="KW-0548">Nucleotidyltransferase</keyword>
<keyword id="KW-1185">Reference proteome</keyword>
<keyword id="KW-0696">RNA-directed RNA polymerase</keyword>
<keyword id="KW-0808">Transferase</keyword>
<keyword id="KW-0693">Viral RNA replication</keyword>
<protein>
    <recommendedName>
        <fullName>RNA replication protein</fullName>
    </recommendedName>
    <alternativeName>
        <fullName>147 kDa protein</fullName>
    </alternativeName>
    <alternativeName>
        <fullName>ORF1 protein</fullName>
    </alternativeName>
    <domain>
        <recommendedName>
            <fullName>RNA-directed RNA polymerase</fullName>
            <ecNumber>2.7.7.48</ecNumber>
        </recommendedName>
    </domain>
    <domain>
        <recommendedName>
            <fullName>Helicase</fullName>
            <ecNumber>3.6.4.13</ecNumber>
        </recommendedName>
    </domain>
</protein>
<organism>
    <name type="scientific">White clover mosaic virus (strain M)</name>
    <name type="common">WCMV</name>
    <dbReference type="NCBI Taxonomy" id="12189"/>
    <lineage>
        <taxon>Viruses</taxon>
        <taxon>Riboviria</taxon>
        <taxon>Orthornavirae</taxon>
        <taxon>Kitrinoviricota</taxon>
        <taxon>Alsuviricetes</taxon>
        <taxon>Tymovirales</taxon>
        <taxon>Alphaflexiviridae</taxon>
        <taxon>Potexvirus</taxon>
        <taxon>White clover mosaic virus</taxon>
    </lineage>
</organism>
<sequence length="1294" mass="147418">MAKVRAALDRITDPSVKAVLNEEAYSHIRPVLRESLTNNPYAIAPDAADTLEKYGIATNPFAVKVHSHGAVKSIENTLLERVGFNLPKEPCIFLFLKRSKLRYLRRGPSNKDIFINLAIEPRDLQRYEEDTLVESWTRITTRYAYISDTLHFFTRKMLADLFFHNPALDVLYATLVLPPEALHKHPSIEPDLYTINYNFNGFQYIPGNHGGGSYSHEFKQLEWLKVGHLKSPELSLTFQMIESIGANHLFMITRGIKITPRVRTFTKDSYVLFPQIFHPRNLNPSKPFPKVKAMQLFTYVKSVKNPTERDIYAKIRQLIKTSELSDYHPDEIVHIVNYFVFISKLDSINSYSDILSLPIWSKALLPIKTKITQLWEKLTGARAFNQLLDALQWKTFTYSLEVVDFSTAPSQRDCFMEDERLETDTLEDEVSQNANNNKPTSLQNIEEAVKNNPDLPWAPWLLILQAHNADCTQKQYDPENNLILPIQEINTLPKHQHPDIPTDLLTLLTKLHREPTTVPLDNHRARAYGSDVKNLRIGALLKKQSKDWLASFALKTENIERQVLMSVIHGAGGSGKSHAIQTWMRSLNRRDRHVTIILPTTDLRNDWTTKVPNLEQANFKTFEKALCQPCGKIIVFDDYSKLPQGYIEAFLAINQNVILAILTGDSKQSFHHESNEDAYTATLEPSINTYQPFCRYYLNITHRNKPDLANKLGVYSCSSGTTSFTMSSQALKGMPILSPSIMKKTALGEMGQKSMTYAGCQGLTTKAVQILLDTNTPLCSSNVIYTALSRAVDHIHFINTGPNSTDFWEKLDSTPYLKTFLDCVREERMNEIVAVEEPPAPVPAPTTHFPKVNPTTVIESYVHDLPEKHGREIFSETHGHSNAIQTDNPVVQLFPHQQAKDETLYWATIEARLQCTSSEENLKEFHLKHDIGDILFLNYKQAMNLPQDPIPFNPDLWTLCKQEIENTYLKKSAAALVNAATRQSPDFDSHAIALFLKSQWVKKTEKIGCLKIKAGQTIAAFMQQTVMIYGTMARYMRKFRNQYCPRKIFVNCETTPADFNSFILDEWNFNRTCFSNDFTAFDQSQDGSILQFEVIKAKFHNIPEDIIEGYIQIKTHAKIFLGTLSIMRLSGEGPTFDANTEANIAYTHTKFNIPCDAAQVYAGDDMSIDYVASVKPSFNMIEHLMKLKGKPVFNTQTQGDFAEFCGWTISPKGIIKKPEKMNMSIELQKNINKFHEVKRSYALDHAFAYQLGDELHELYNESEAEHHQLATRSLILAGQATALDILDYGLRDLK</sequence>
<reference key="1">
    <citation type="journal article" date="1988" name="Nucleic Acids Res.">
        <title>The complete nucleotide sequence of the potexvirus white clover mosaic virus.</title>
        <authorList>
            <person name="Forster R.L.S."/>
            <person name="Bevan M.W."/>
            <person name="Harbison S.-A."/>
            <person name="Gardner R.C."/>
        </authorList>
    </citation>
    <scope>NUCLEOTIDE SEQUENCE [GENOMIC RNA]</scope>
</reference>
<accession>P09498</accession>